<gene>
    <name type="primary">htpX</name>
    <name type="ordered locus">XF_2625</name>
</gene>
<organism>
    <name type="scientific">Xylella fastidiosa (strain 9a5c)</name>
    <dbReference type="NCBI Taxonomy" id="160492"/>
    <lineage>
        <taxon>Bacteria</taxon>
        <taxon>Pseudomonadati</taxon>
        <taxon>Pseudomonadota</taxon>
        <taxon>Gammaproteobacteria</taxon>
        <taxon>Lysobacterales</taxon>
        <taxon>Lysobacteraceae</taxon>
        <taxon>Xylella</taxon>
    </lineage>
</organism>
<accession>Q9PA93</accession>
<evidence type="ECO:0000250" key="1"/>
<evidence type="ECO:0000255" key="2"/>
<evidence type="ECO:0000269" key="3">
    <source>
    </source>
</evidence>
<evidence type="ECO:0000305" key="4"/>
<feature type="chain" id="PRO_0000138909" description="Protease HtpX">
    <location>
        <begin position="1"/>
        <end position="289"/>
    </location>
</feature>
<feature type="transmembrane region" description="Helical" evidence="2">
    <location>
        <begin position="5"/>
        <end position="25"/>
    </location>
</feature>
<feature type="transmembrane region" description="Helical" evidence="2">
    <location>
        <begin position="33"/>
        <end position="53"/>
    </location>
</feature>
<feature type="transmembrane region" description="Helical" evidence="2">
    <location>
        <begin position="155"/>
        <end position="175"/>
    </location>
</feature>
<feature type="transmembrane region" description="Helical" evidence="2">
    <location>
        <begin position="193"/>
        <end position="213"/>
    </location>
</feature>
<feature type="active site" evidence="1">
    <location>
        <position position="141"/>
    </location>
</feature>
<feature type="binding site" evidence="1">
    <location>
        <position position="140"/>
    </location>
    <ligand>
        <name>Zn(2+)</name>
        <dbReference type="ChEBI" id="CHEBI:29105"/>
        <note>catalytic</note>
    </ligand>
</feature>
<feature type="binding site" evidence="1">
    <location>
        <position position="144"/>
    </location>
    <ligand>
        <name>Zn(2+)</name>
        <dbReference type="ChEBI" id="CHEBI:29105"/>
        <note>catalytic</note>
    </ligand>
</feature>
<feature type="binding site" evidence="1">
    <location>
        <position position="218"/>
    </location>
    <ligand>
        <name>Zn(2+)</name>
        <dbReference type="ChEBI" id="CHEBI:29105"/>
        <note>catalytic</note>
    </ligand>
</feature>
<sequence>MLTRIVLFAITNLAVLILASIVMSLLGVNPTQMSGLLVMALIFGFAGSFISLLMSKAIAKRTTGAYVIDQPRNLSERWLLDTVSRQAEIVGIGRPEIAIYEGVEINAFATGADRNNALVAVSTGLLQNMSQDEVEAVLGHEIAHVANGDMVTMALLQGVLNTFVIVLARVVGGFIDSLLSGNRGGARGVAYYAIVLVLELLFGLFATMITMWFSRRREFRADEGGAYLAGRNKMIAALERLGINHGQSTLPTQVQAFGIYGGIGEGLRKLFLSHPPLSERIAALRVARQ</sequence>
<proteinExistence type="evidence at transcript level"/>
<comment type="cofactor">
    <cofactor evidence="1">
        <name>Zn(2+)</name>
        <dbReference type="ChEBI" id="CHEBI:29105"/>
    </cofactor>
    <text evidence="1">Binds 1 zinc ion per subunit.</text>
</comment>
<comment type="subcellular location">
    <subcellularLocation>
        <location evidence="1">Cell inner membrane</location>
        <topology evidence="1">Multi-pass membrane protein</topology>
    </subcellularLocation>
</comment>
<comment type="induction">
    <text evidence="3">Constitutely expressed in rich medium it is induced at 37 but not 28 degrees Celsius in minimal medium.</text>
</comment>
<comment type="similarity">
    <text evidence="4">Belongs to the peptidase M48B family.</text>
</comment>
<protein>
    <recommendedName>
        <fullName>Protease HtpX</fullName>
        <ecNumber>3.4.24.-</ecNumber>
    </recommendedName>
    <alternativeName>
        <fullName>Heat shock protein HtpX</fullName>
    </alternativeName>
</protein>
<keyword id="KW-0997">Cell inner membrane</keyword>
<keyword id="KW-1003">Cell membrane</keyword>
<keyword id="KW-0378">Hydrolase</keyword>
<keyword id="KW-0472">Membrane</keyword>
<keyword id="KW-0479">Metal-binding</keyword>
<keyword id="KW-0482">Metalloprotease</keyword>
<keyword id="KW-0645">Protease</keyword>
<keyword id="KW-0812">Transmembrane</keyword>
<keyword id="KW-1133">Transmembrane helix</keyword>
<keyword id="KW-0862">Zinc</keyword>
<name>HTPX_XYLFA</name>
<dbReference type="EC" id="3.4.24.-"/>
<dbReference type="EMBL" id="AE003849">
    <property type="protein sequence ID" value="AAF85422.1"/>
    <property type="molecule type" value="Genomic_DNA"/>
</dbReference>
<dbReference type="PIR" id="B82534">
    <property type="entry name" value="B82534"/>
</dbReference>
<dbReference type="RefSeq" id="WP_010895042.1">
    <property type="nucleotide sequence ID" value="NC_002488.3"/>
</dbReference>
<dbReference type="SMR" id="Q9PA93"/>
<dbReference type="STRING" id="160492.XF_2625"/>
<dbReference type="MEROPS" id="M48.002"/>
<dbReference type="KEGG" id="xfa:XF_2625"/>
<dbReference type="eggNOG" id="COG0501">
    <property type="taxonomic scope" value="Bacteria"/>
</dbReference>
<dbReference type="HOGENOM" id="CLU_042266_1_0_6"/>
<dbReference type="Proteomes" id="UP000000812">
    <property type="component" value="Chromosome"/>
</dbReference>
<dbReference type="GO" id="GO:0005886">
    <property type="term" value="C:plasma membrane"/>
    <property type="evidence" value="ECO:0007669"/>
    <property type="project" value="UniProtKB-SubCell"/>
</dbReference>
<dbReference type="GO" id="GO:0004222">
    <property type="term" value="F:metalloendopeptidase activity"/>
    <property type="evidence" value="ECO:0007669"/>
    <property type="project" value="UniProtKB-UniRule"/>
</dbReference>
<dbReference type="GO" id="GO:0008270">
    <property type="term" value="F:zinc ion binding"/>
    <property type="evidence" value="ECO:0007669"/>
    <property type="project" value="UniProtKB-UniRule"/>
</dbReference>
<dbReference type="GO" id="GO:0006508">
    <property type="term" value="P:proteolysis"/>
    <property type="evidence" value="ECO:0007669"/>
    <property type="project" value="UniProtKB-KW"/>
</dbReference>
<dbReference type="CDD" id="cd07335">
    <property type="entry name" value="M48B_HtpX_like"/>
    <property type="match status" value="1"/>
</dbReference>
<dbReference type="Gene3D" id="3.30.2010.10">
    <property type="entry name" value="Metalloproteases ('zincins'), catalytic domain"/>
    <property type="match status" value="1"/>
</dbReference>
<dbReference type="HAMAP" id="MF_00188">
    <property type="entry name" value="Pept_M48_protease_HtpX"/>
    <property type="match status" value="1"/>
</dbReference>
<dbReference type="InterPro" id="IPR050083">
    <property type="entry name" value="HtpX_protease"/>
</dbReference>
<dbReference type="InterPro" id="IPR022919">
    <property type="entry name" value="Pept_M48_protease_HtpX"/>
</dbReference>
<dbReference type="InterPro" id="IPR001915">
    <property type="entry name" value="Peptidase_M48"/>
</dbReference>
<dbReference type="NCBIfam" id="NF003965">
    <property type="entry name" value="PRK05457.1"/>
    <property type="match status" value="1"/>
</dbReference>
<dbReference type="PANTHER" id="PTHR43221">
    <property type="entry name" value="PROTEASE HTPX"/>
    <property type="match status" value="1"/>
</dbReference>
<dbReference type="PANTHER" id="PTHR43221:SF1">
    <property type="entry name" value="PROTEASE HTPX"/>
    <property type="match status" value="1"/>
</dbReference>
<dbReference type="Pfam" id="PF01435">
    <property type="entry name" value="Peptidase_M48"/>
    <property type="match status" value="1"/>
</dbReference>
<reference key="1">
    <citation type="journal article" date="2000" name="Nature">
        <title>The genome sequence of the plant pathogen Xylella fastidiosa.</title>
        <authorList>
            <person name="Simpson A.J.G."/>
            <person name="Reinach F.C."/>
            <person name="Arruda P."/>
            <person name="Abreu F.A."/>
            <person name="Acencio M."/>
            <person name="Alvarenga R."/>
            <person name="Alves L.M.C."/>
            <person name="Araya J.E."/>
            <person name="Baia G.S."/>
            <person name="Baptista C.S."/>
            <person name="Barros M.H."/>
            <person name="Bonaccorsi E.D."/>
            <person name="Bordin S."/>
            <person name="Bove J.M."/>
            <person name="Briones M.R.S."/>
            <person name="Bueno M.R.P."/>
            <person name="Camargo A.A."/>
            <person name="Camargo L.E.A."/>
            <person name="Carraro D.M."/>
            <person name="Carrer H."/>
            <person name="Colauto N.B."/>
            <person name="Colombo C."/>
            <person name="Costa F.F."/>
            <person name="Costa M.C.R."/>
            <person name="Costa-Neto C.M."/>
            <person name="Coutinho L.L."/>
            <person name="Cristofani M."/>
            <person name="Dias-Neto E."/>
            <person name="Docena C."/>
            <person name="El-Dorry H."/>
            <person name="Facincani A.P."/>
            <person name="Ferreira A.J.S."/>
            <person name="Ferreira V.C.A."/>
            <person name="Ferro J.A."/>
            <person name="Fraga J.S."/>
            <person name="Franca S.C."/>
            <person name="Franco M.C."/>
            <person name="Frohme M."/>
            <person name="Furlan L.R."/>
            <person name="Garnier M."/>
            <person name="Goldman G.H."/>
            <person name="Goldman M.H.S."/>
            <person name="Gomes S.L."/>
            <person name="Gruber A."/>
            <person name="Ho P.L."/>
            <person name="Hoheisel J.D."/>
            <person name="Junqueira M.L."/>
            <person name="Kemper E.L."/>
            <person name="Kitajima J.P."/>
            <person name="Krieger J.E."/>
            <person name="Kuramae E.E."/>
            <person name="Laigret F."/>
            <person name="Lambais M.R."/>
            <person name="Leite L.C.C."/>
            <person name="Lemos E.G.M."/>
            <person name="Lemos M.V.F."/>
            <person name="Lopes S.A."/>
            <person name="Lopes C.R."/>
            <person name="Machado J.A."/>
            <person name="Machado M.A."/>
            <person name="Madeira A.M.B.N."/>
            <person name="Madeira H.M.F."/>
            <person name="Marino C.L."/>
            <person name="Marques M.V."/>
            <person name="Martins E.A.L."/>
            <person name="Martins E.M.F."/>
            <person name="Matsukuma A.Y."/>
            <person name="Menck C.F.M."/>
            <person name="Miracca E.C."/>
            <person name="Miyaki C.Y."/>
            <person name="Monteiro-Vitorello C.B."/>
            <person name="Moon D.H."/>
            <person name="Nagai M.A."/>
            <person name="Nascimento A.L.T.O."/>
            <person name="Netto L.E.S."/>
            <person name="Nhani A. Jr."/>
            <person name="Nobrega F.G."/>
            <person name="Nunes L.R."/>
            <person name="Oliveira M.A."/>
            <person name="de Oliveira M.C."/>
            <person name="de Oliveira R.C."/>
            <person name="Palmieri D.A."/>
            <person name="Paris A."/>
            <person name="Peixoto B.R."/>
            <person name="Pereira G.A.G."/>
            <person name="Pereira H.A. Jr."/>
            <person name="Pesquero J.B."/>
            <person name="Quaggio R.B."/>
            <person name="Roberto P.G."/>
            <person name="Rodrigues V."/>
            <person name="de Rosa A.J.M."/>
            <person name="de Rosa V.E. Jr."/>
            <person name="de Sa R.G."/>
            <person name="Santelli R.V."/>
            <person name="Sawasaki H.E."/>
            <person name="da Silva A.C.R."/>
            <person name="da Silva A.M."/>
            <person name="da Silva F.R."/>
            <person name="Silva W.A. Jr."/>
            <person name="da Silveira J.F."/>
            <person name="Silvestri M.L.Z."/>
            <person name="Siqueira W.J."/>
            <person name="de Souza A.A."/>
            <person name="de Souza A.P."/>
            <person name="Terenzi M.F."/>
            <person name="Truffi D."/>
            <person name="Tsai S.M."/>
            <person name="Tsuhako M.H."/>
            <person name="Vallada H."/>
            <person name="Van Sluys M.A."/>
            <person name="Verjovski-Almeida S."/>
            <person name="Vettore A.L."/>
            <person name="Zago M.A."/>
            <person name="Zatz M."/>
            <person name="Meidanis J."/>
            <person name="Setubal J.C."/>
        </authorList>
    </citation>
    <scope>NUCLEOTIDE SEQUENCE [LARGE SCALE GENOMIC DNA]</scope>
    <source>
        <strain>9a5c</strain>
    </source>
</reference>
<reference key="2">
    <citation type="journal article" date="2004" name="Curr. Microbiol.">
        <title>Regulation of the htpX gene of Xylella fastidiosa and its expression in E. coli.</title>
        <authorList>
            <person name="Coltri P.P."/>
            <person name="Rosato Y.B."/>
        </authorList>
    </citation>
    <scope>INDUCTION</scope>
    <source>
        <strain>9a5c</strain>
    </source>
</reference>